<reference key="1">
    <citation type="journal article" date="1999" name="FEBS Lett.">
        <title>Locust corpora cardiaca contain an inactive adipokinetic hormone.</title>
        <authorList>
            <person name="Siegert K.J."/>
        </authorList>
    </citation>
    <scope>PROTEIN SEQUENCE</scope>
    <scope>FUNCTION</scope>
    <scope>MASS SPECTROMETRY</scope>
    <scope>TISSUE SPECIFICITY</scope>
    <scope>PYROGLUTAMATE FORMATION AT GLN-1</scope>
    <scope>AMIDATION AT PRO-10</scope>
    <source>
        <tissue>Corpora cardiaca</tissue>
    </source>
</reference>
<keyword id="KW-0027">Amidation</keyword>
<keyword id="KW-0903">Direct protein sequencing</keyword>
<keyword id="KW-0372">Hormone</keyword>
<keyword id="KW-0527">Neuropeptide</keyword>
<keyword id="KW-0873">Pyrrolidone carboxylic acid</keyword>
<keyword id="KW-0964">Secreted</keyword>
<sequence length="10" mass="1222">QVTFSRDWSP</sequence>
<evidence type="ECO:0000269" key="1">
    <source>
    </source>
</evidence>
<evidence type="ECO:0000305" key="2"/>
<accession>P81626</accession>
<protein>
    <recommendedName>
        <fullName>Hypertrehalosaemic hormone</fullName>
        <shortName>Lom-HrTH</shortName>
    </recommendedName>
    <alternativeName>
        <fullName>Hypertrehalosaemic neuropeptide</fullName>
    </alternativeName>
    <alternativeName>
        <fullName>Peptide hormone</fullName>
    </alternativeName>
</protein>
<dbReference type="GO" id="GO:0005576">
    <property type="term" value="C:extracellular region"/>
    <property type="evidence" value="ECO:0007669"/>
    <property type="project" value="UniProtKB-SubCell"/>
</dbReference>
<dbReference type="GO" id="GO:0005179">
    <property type="term" value="F:hormone activity"/>
    <property type="evidence" value="ECO:0007669"/>
    <property type="project" value="UniProtKB-KW"/>
</dbReference>
<dbReference type="GO" id="GO:0007218">
    <property type="term" value="P:neuropeptide signaling pathway"/>
    <property type="evidence" value="ECO:0007669"/>
    <property type="project" value="UniProtKB-KW"/>
</dbReference>
<dbReference type="InterPro" id="IPR002047">
    <property type="entry name" value="Adipokinetic_hormone_CS"/>
</dbReference>
<dbReference type="PROSITE" id="PS00256">
    <property type="entry name" value="AKH"/>
    <property type="match status" value="1"/>
</dbReference>
<feature type="peptide" id="PRO_0000043445" description="Hypertrehalosaemic hormone">
    <location>
        <begin position="1"/>
        <end position="10"/>
    </location>
</feature>
<feature type="modified residue" description="Pyrrolidone carboxylic acid" evidence="1">
    <location>
        <position position="1"/>
    </location>
</feature>
<feature type="modified residue" description="Proline amide" evidence="1">
    <location>
        <position position="10"/>
    </location>
</feature>
<organism>
    <name type="scientific">Locusta migratoria</name>
    <name type="common">Migratory locust</name>
    <dbReference type="NCBI Taxonomy" id="7004"/>
    <lineage>
        <taxon>Eukaryota</taxon>
        <taxon>Metazoa</taxon>
        <taxon>Ecdysozoa</taxon>
        <taxon>Arthropoda</taxon>
        <taxon>Hexapoda</taxon>
        <taxon>Insecta</taxon>
        <taxon>Pterygota</taxon>
        <taxon>Neoptera</taxon>
        <taxon>Polyneoptera</taxon>
        <taxon>Orthoptera</taxon>
        <taxon>Caelifera</taxon>
        <taxon>Acrididea</taxon>
        <taxon>Acridomorpha</taxon>
        <taxon>Acridoidea</taxon>
        <taxon>Acrididae</taxon>
        <taxon>Oedipodinae</taxon>
        <taxon>Locusta</taxon>
    </lineage>
</organism>
<name>HTF_LOCMI</name>
<comment type="function">
    <text evidence="1">The in vivo function of this peptide is unknown. Has no adipokinetic or hypertrehalosaemic activity in locusts. Has hypertrehalosaemic activity in the cockcroach P.americana.</text>
</comment>
<comment type="subcellular location">
    <subcellularLocation>
        <location>Secreted</location>
    </subcellularLocation>
</comment>
<comment type="tissue specificity">
    <text evidence="1">Synthesized in the neurosecretory cells of the brain, and transported to the storage lobe of the corpora cardiaca.</text>
</comment>
<comment type="mass spectrometry" mass="1204.3" method="MALDI" evidence="1"/>
<comment type="similarity">
    <text evidence="2">Belongs to the AKH/HRTH/RPCH family.</text>
</comment>
<proteinExistence type="evidence at protein level"/>